<gene>
    <name evidence="1" type="primary">murG</name>
    <name type="ordered locus">BMEA_A1479</name>
</gene>
<name>MURG_BRUMB</name>
<dbReference type="EC" id="2.4.1.227" evidence="1"/>
<dbReference type="EMBL" id="CP001488">
    <property type="protein sequence ID" value="ACO01192.1"/>
    <property type="molecule type" value="Genomic_DNA"/>
</dbReference>
<dbReference type="RefSeq" id="WP_004684021.1">
    <property type="nucleotide sequence ID" value="NC_012441.1"/>
</dbReference>
<dbReference type="SMR" id="C0RE70"/>
<dbReference type="CAZy" id="GT28">
    <property type="family name" value="Glycosyltransferase Family 28"/>
</dbReference>
<dbReference type="GeneID" id="29593363"/>
<dbReference type="KEGG" id="bmi:BMEA_A1479"/>
<dbReference type="HOGENOM" id="CLU_037404_2_1_5"/>
<dbReference type="UniPathway" id="UPA00219"/>
<dbReference type="PHI-base" id="PHI:11554"/>
<dbReference type="Proteomes" id="UP000001748">
    <property type="component" value="Chromosome I"/>
</dbReference>
<dbReference type="GO" id="GO:0005886">
    <property type="term" value="C:plasma membrane"/>
    <property type="evidence" value="ECO:0007669"/>
    <property type="project" value="UniProtKB-SubCell"/>
</dbReference>
<dbReference type="GO" id="GO:0051991">
    <property type="term" value="F:UDP-N-acetyl-D-glucosamine:N-acetylmuramoyl-L-alanyl-D-glutamyl-meso-2,6-diaminopimelyl-D-alanyl-D-alanine-diphosphoundecaprenol 4-beta-N-acetylglucosaminlytransferase activity"/>
    <property type="evidence" value="ECO:0007669"/>
    <property type="project" value="RHEA"/>
</dbReference>
<dbReference type="GO" id="GO:0050511">
    <property type="term" value="F:undecaprenyldiphospho-muramoylpentapeptide beta-N-acetylglucosaminyltransferase activity"/>
    <property type="evidence" value="ECO:0007669"/>
    <property type="project" value="UniProtKB-UniRule"/>
</dbReference>
<dbReference type="GO" id="GO:0005975">
    <property type="term" value="P:carbohydrate metabolic process"/>
    <property type="evidence" value="ECO:0007669"/>
    <property type="project" value="InterPro"/>
</dbReference>
<dbReference type="GO" id="GO:0051301">
    <property type="term" value="P:cell division"/>
    <property type="evidence" value="ECO:0007669"/>
    <property type="project" value="UniProtKB-KW"/>
</dbReference>
<dbReference type="GO" id="GO:0071555">
    <property type="term" value="P:cell wall organization"/>
    <property type="evidence" value="ECO:0007669"/>
    <property type="project" value="UniProtKB-KW"/>
</dbReference>
<dbReference type="GO" id="GO:0030259">
    <property type="term" value="P:lipid glycosylation"/>
    <property type="evidence" value="ECO:0007669"/>
    <property type="project" value="UniProtKB-UniRule"/>
</dbReference>
<dbReference type="GO" id="GO:0009252">
    <property type="term" value="P:peptidoglycan biosynthetic process"/>
    <property type="evidence" value="ECO:0007669"/>
    <property type="project" value="UniProtKB-UniRule"/>
</dbReference>
<dbReference type="GO" id="GO:0008360">
    <property type="term" value="P:regulation of cell shape"/>
    <property type="evidence" value="ECO:0007669"/>
    <property type="project" value="UniProtKB-KW"/>
</dbReference>
<dbReference type="CDD" id="cd03785">
    <property type="entry name" value="GT28_MurG"/>
    <property type="match status" value="1"/>
</dbReference>
<dbReference type="Gene3D" id="3.40.50.2000">
    <property type="entry name" value="Glycogen Phosphorylase B"/>
    <property type="match status" value="2"/>
</dbReference>
<dbReference type="HAMAP" id="MF_00033">
    <property type="entry name" value="MurG"/>
    <property type="match status" value="1"/>
</dbReference>
<dbReference type="InterPro" id="IPR006009">
    <property type="entry name" value="GlcNAc_MurG"/>
</dbReference>
<dbReference type="InterPro" id="IPR007235">
    <property type="entry name" value="Glyco_trans_28_C"/>
</dbReference>
<dbReference type="InterPro" id="IPR004276">
    <property type="entry name" value="GlycoTrans_28_N"/>
</dbReference>
<dbReference type="NCBIfam" id="TIGR01133">
    <property type="entry name" value="murG"/>
    <property type="match status" value="1"/>
</dbReference>
<dbReference type="PANTHER" id="PTHR21015:SF22">
    <property type="entry name" value="GLYCOSYLTRANSFERASE"/>
    <property type="match status" value="1"/>
</dbReference>
<dbReference type="PANTHER" id="PTHR21015">
    <property type="entry name" value="UDP-N-ACETYLGLUCOSAMINE--N-ACETYLMURAMYL-(PENTAPEPTIDE) PYROPHOSPHORYL-UNDECAPRENOL N-ACETYLGLUCOSAMINE TRANSFERASE 1"/>
    <property type="match status" value="1"/>
</dbReference>
<dbReference type="Pfam" id="PF04101">
    <property type="entry name" value="Glyco_tran_28_C"/>
    <property type="match status" value="1"/>
</dbReference>
<dbReference type="Pfam" id="PF03033">
    <property type="entry name" value="Glyco_transf_28"/>
    <property type="match status" value="1"/>
</dbReference>
<dbReference type="SUPFAM" id="SSF53756">
    <property type="entry name" value="UDP-Glycosyltransferase/glycogen phosphorylase"/>
    <property type="match status" value="1"/>
</dbReference>
<proteinExistence type="inferred from homology"/>
<sequence>MDNLANQGVIVLAAGGTGGHLFPAEALAHELRARGWDVHLATDARAQRFVGAFAQDHVHVIRSATIAGRNPVALLKTFWSLWQGNLDSRKLFRRLKPKLVVGFGGYPTLPPLYAASNMGIPTLIHEQNAVMGRANKGLAGRVKAIAGGFLPENSGAYAAKTVITGNPVRSPVLVAAATPYTPAGKDDRFRLLVFGGSQGAQFFSQAIPAAVALLPEHERARLLITQQARKEDEASARQAYEKLGVPADVAPFFNDMPARMADAHFVIARSGASTVSEITVIGRPAMLVPFPHALDHDQAANAAALAAAGGAEVVRQADLSPQRLAEMLQSAMNELERLEQQAKAAKSVGKPDAARLLADLAEAIASGKTVQEFKEGNRP</sequence>
<evidence type="ECO:0000255" key="1">
    <source>
        <dbReference type="HAMAP-Rule" id="MF_00033"/>
    </source>
</evidence>
<feature type="chain" id="PRO_1000117004" description="UDP-N-acetylglucosamine--N-acetylmuramyl-(pentapeptide) pyrophosphoryl-undecaprenol N-acetylglucosamine transferase">
    <location>
        <begin position="1"/>
        <end position="379"/>
    </location>
</feature>
<feature type="binding site" evidence="1">
    <location>
        <begin position="17"/>
        <end position="19"/>
    </location>
    <ligand>
        <name>UDP-N-acetyl-alpha-D-glucosamine</name>
        <dbReference type="ChEBI" id="CHEBI:57705"/>
    </ligand>
</feature>
<feature type="binding site" evidence="1">
    <location>
        <position position="128"/>
    </location>
    <ligand>
        <name>UDP-N-acetyl-alpha-D-glucosamine</name>
        <dbReference type="ChEBI" id="CHEBI:57705"/>
    </ligand>
</feature>
<feature type="binding site" evidence="1">
    <location>
        <position position="169"/>
    </location>
    <ligand>
        <name>UDP-N-acetyl-alpha-D-glucosamine</name>
        <dbReference type="ChEBI" id="CHEBI:57705"/>
    </ligand>
</feature>
<feature type="binding site" evidence="1">
    <location>
        <position position="197"/>
    </location>
    <ligand>
        <name>UDP-N-acetyl-alpha-D-glucosamine</name>
        <dbReference type="ChEBI" id="CHEBI:57705"/>
    </ligand>
</feature>
<feature type="binding site" evidence="1">
    <location>
        <position position="298"/>
    </location>
    <ligand>
        <name>UDP-N-acetyl-alpha-D-glucosamine</name>
        <dbReference type="ChEBI" id="CHEBI:57705"/>
    </ligand>
</feature>
<accession>C0RE70</accession>
<organism>
    <name type="scientific">Brucella melitensis biotype 2 (strain ATCC 23457)</name>
    <dbReference type="NCBI Taxonomy" id="546272"/>
    <lineage>
        <taxon>Bacteria</taxon>
        <taxon>Pseudomonadati</taxon>
        <taxon>Pseudomonadota</taxon>
        <taxon>Alphaproteobacteria</taxon>
        <taxon>Hyphomicrobiales</taxon>
        <taxon>Brucellaceae</taxon>
        <taxon>Brucella/Ochrobactrum group</taxon>
        <taxon>Brucella</taxon>
    </lineage>
</organism>
<comment type="function">
    <text evidence="1">Cell wall formation. Catalyzes the transfer of a GlcNAc subunit on undecaprenyl-pyrophosphoryl-MurNAc-pentapeptide (lipid intermediate I) to form undecaprenyl-pyrophosphoryl-MurNAc-(pentapeptide)GlcNAc (lipid intermediate II).</text>
</comment>
<comment type="catalytic activity">
    <reaction evidence="1">
        <text>di-trans,octa-cis-undecaprenyl diphospho-N-acetyl-alpha-D-muramoyl-L-alanyl-D-glutamyl-meso-2,6-diaminopimeloyl-D-alanyl-D-alanine + UDP-N-acetyl-alpha-D-glucosamine = di-trans,octa-cis-undecaprenyl diphospho-[N-acetyl-alpha-D-glucosaminyl-(1-&gt;4)]-N-acetyl-alpha-D-muramoyl-L-alanyl-D-glutamyl-meso-2,6-diaminopimeloyl-D-alanyl-D-alanine + UDP + H(+)</text>
        <dbReference type="Rhea" id="RHEA:31227"/>
        <dbReference type="ChEBI" id="CHEBI:15378"/>
        <dbReference type="ChEBI" id="CHEBI:57705"/>
        <dbReference type="ChEBI" id="CHEBI:58223"/>
        <dbReference type="ChEBI" id="CHEBI:61387"/>
        <dbReference type="ChEBI" id="CHEBI:61388"/>
        <dbReference type="EC" id="2.4.1.227"/>
    </reaction>
</comment>
<comment type="pathway">
    <text evidence="1">Cell wall biogenesis; peptidoglycan biosynthesis.</text>
</comment>
<comment type="subcellular location">
    <subcellularLocation>
        <location evidence="1">Cell inner membrane</location>
        <topology evidence="1">Peripheral membrane protein</topology>
        <orientation evidence="1">Cytoplasmic side</orientation>
    </subcellularLocation>
</comment>
<comment type="similarity">
    <text evidence="1">Belongs to the glycosyltransferase 28 family. MurG subfamily.</text>
</comment>
<protein>
    <recommendedName>
        <fullName evidence="1">UDP-N-acetylglucosamine--N-acetylmuramyl-(pentapeptide) pyrophosphoryl-undecaprenol N-acetylglucosamine transferase</fullName>
        <ecNumber evidence="1">2.4.1.227</ecNumber>
    </recommendedName>
    <alternativeName>
        <fullName evidence="1">Undecaprenyl-PP-MurNAc-pentapeptide-UDPGlcNAc GlcNAc transferase</fullName>
    </alternativeName>
</protein>
<keyword id="KW-0131">Cell cycle</keyword>
<keyword id="KW-0132">Cell division</keyword>
<keyword id="KW-0997">Cell inner membrane</keyword>
<keyword id="KW-1003">Cell membrane</keyword>
<keyword id="KW-0133">Cell shape</keyword>
<keyword id="KW-0961">Cell wall biogenesis/degradation</keyword>
<keyword id="KW-0328">Glycosyltransferase</keyword>
<keyword id="KW-0472">Membrane</keyword>
<keyword id="KW-0573">Peptidoglycan synthesis</keyword>
<keyword id="KW-0808">Transferase</keyword>
<reference key="1">
    <citation type="submission" date="2009-03" db="EMBL/GenBank/DDBJ databases">
        <title>Brucella melitensis ATCC 23457 whole genome shotgun sequencing project.</title>
        <authorList>
            <person name="Setubal J.C."/>
            <person name="Boyle S."/>
            <person name="Crasta O.R."/>
            <person name="Gillespie J.J."/>
            <person name="Kenyon R.W."/>
            <person name="Lu J."/>
            <person name="Mane S."/>
            <person name="Nagrani S."/>
            <person name="Shallom J.M."/>
            <person name="Shallom S."/>
            <person name="Shukla M."/>
            <person name="Snyder E.E."/>
            <person name="Sobral B.W."/>
            <person name="Wattam A.R."/>
            <person name="Will R."/>
            <person name="Williams K."/>
            <person name="Yoo H."/>
            <person name="Munk C."/>
            <person name="Tapia R."/>
            <person name="Han C."/>
            <person name="Detter J.C."/>
            <person name="Bruce D."/>
            <person name="Brettin T.S."/>
        </authorList>
    </citation>
    <scope>NUCLEOTIDE SEQUENCE [LARGE SCALE GENOMIC DNA]</scope>
    <source>
        <strain>ATCC 23457</strain>
    </source>
</reference>